<sequence length="222" mass="24215">MAKRSWMAKGLSASRPMTGEMGHEPLLVAFDFDGTLTVKDSFNAFLKWRAGPRWSFGVLRLTPALIAYVFDRNRGKLKAAAVRQFLKGATVAQIENDARAFAEAFAPSLLRPDAVAVWRGWRAKGAKMVIVTASPDLIVAPFARGLGADLLIGTRLRCSDDGRILGGLDGNNCRAKEKVIRLREVFGPDVRLTAAYGDTSGDTEMLAIADEKGYRIFRGKPA</sequence>
<organism>
    <name type="scientific">Caulobacter vibrioides (strain NA1000 / CB15N)</name>
    <name type="common">Caulobacter crescentus</name>
    <dbReference type="NCBI Taxonomy" id="565050"/>
    <lineage>
        <taxon>Bacteria</taxon>
        <taxon>Pseudomonadati</taxon>
        <taxon>Pseudomonadota</taxon>
        <taxon>Alphaproteobacteria</taxon>
        <taxon>Caulobacterales</taxon>
        <taxon>Caulobacteraceae</taxon>
        <taxon>Caulobacter</taxon>
    </lineage>
</organism>
<reference key="1">
    <citation type="journal article" date="2001" name="Mol. Microbiol.">
        <title>Precise amounts of a novel member of a phosphotransferase superfamily are essential for growth and normal morphology in Caulobacter crescentus.</title>
        <authorList>
            <person name="Fuchs T."/>
            <person name="Wiget P."/>
            <person name="Osteras M."/>
            <person name="Jenal U."/>
        </authorList>
    </citation>
    <scope>NUCLEOTIDE SEQUENCE [GENOMIC DNA]</scope>
</reference>
<reference key="2">
    <citation type="journal article" date="2010" name="J. Bacteriol.">
        <title>The genetic basis of laboratory adaptation in Caulobacter crescentus.</title>
        <authorList>
            <person name="Marks M.E."/>
            <person name="Castro-Rojas C.M."/>
            <person name="Teiling C."/>
            <person name="Du L."/>
            <person name="Kapatral V."/>
            <person name="Walunas T.L."/>
            <person name="Crosson S."/>
        </authorList>
    </citation>
    <scope>NUCLEOTIDE SEQUENCE [LARGE SCALE GENOMIC DNA]</scope>
    <source>
        <strain>NA1000 / CB15N</strain>
    </source>
</reference>
<proteinExistence type="predicted"/>
<comment type="sequence caution" evidence="1">
    <conflict type="erroneous initiation">
        <sequence resource="EMBL-CDS" id="CAA09091"/>
    </conflict>
</comment>
<name>CICA_CAUVN</name>
<evidence type="ECO:0000305" key="1"/>
<protein>
    <recommendedName>
        <fullName>Protein CicA</fullName>
    </recommendedName>
</protein>
<feature type="chain" id="PRO_0000378297" description="Protein CicA">
    <location>
        <begin position="1"/>
        <end position="222"/>
    </location>
</feature>
<dbReference type="EMBL" id="AJ010321">
    <property type="protein sequence ID" value="CAA09091.1"/>
    <property type="status" value="ALT_INIT"/>
    <property type="molecule type" value="Genomic_DNA"/>
</dbReference>
<dbReference type="EMBL" id="CP001340">
    <property type="protein sequence ID" value="ACL95505.1"/>
    <property type="molecule type" value="Genomic_DNA"/>
</dbReference>
<dbReference type="RefSeq" id="WP_012640373.1">
    <property type="nucleotide sequence ID" value="NC_011916.1"/>
</dbReference>
<dbReference type="RefSeq" id="YP_002517413.1">
    <property type="nucleotide sequence ID" value="NC_011916.1"/>
</dbReference>
<dbReference type="SMR" id="B8GX15"/>
<dbReference type="GeneID" id="7333371"/>
<dbReference type="KEGG" id="ccs:CCNA_02040"/>
<dbReference type="PATRIC" id="fig|565050.3.peg.1998"/>
<dbReference type="HOGENOM" id="CLU_052657_2_1_5"/>
<dbReference type="OrthoDB" id="9794212at2"/>
<dbReference type="PhylomeDB" id="B8GX15"/>
<dbReference type="Proteomes" id="UP000001364">
    <property type="component" value="Chromosome"/>
</dbReference>
<dbReference type="CDD" id="cd02612">
    <property type="entry name" value="HAD_PGPPase"/>
    <property type="match status" value="1"/>
</dbReference>
<dbReference type="Gene3D" id="3.40.50.1000">
    <property type="entry name" value="HAD superfamily/HAD-like"/>
    <property type="match status" value="1"/>
</dbReference>
<dbReference type="Gene3D" id="1.20.1440.100">
    <property type="entry name" value="SG protein - dephosphorylation function"/>
    <property type="match status" value="1"/>
</dbReference>
<dbReference type="InterPro" id="IPR050582">
    <property type="entry name" value="HAD-like_SerB"/>
</dbReference>
<dbReference type="InterPro" id="IPR036412">
    <property type="entry name" value="HAD-like_sf"/>
</dbReference>
<dbReference type="InterPro" id="IPR006385">
    <property type="entry name" value="HAD_hydro_SerB1"/>
</dbReference>
<dbReference type="InterPro" id="IPR023214">
    <property type="entry name" value="HAD_sf"/>
</dbReference>
<dbReference type="NCBIfam" id="TIGR01488">
    <property type="entry name" value="HAD-SF-IB"/>
    <property type="match status" value="1"/>
</dbReference>
<dbReference type="NCBIfam" id="TIGR01490">
    <property type="entry name" value="HAD-SF-IB-hyp1"/>
    <property type="match status" value="1"/>
</dbReference>
<dbReference type="PANTHER" id="PTHR43344">
    <property type="entry name" value="PHOSPHOSERINE PHOSPHATASE"/>
    <property type="match status" value="1"/>
</dbReference>
<dbReference type="Pfam" id="PF12710">
    <property type="entry name" value="HAD"/>
    <property type="match status" value="1"/>
</dbReference>
<dbReference type="SUPFAM" id="SSF56784">
    <property type="entry name" value="HAD-like"/>
    <property type="match status" value="1"/>
</dbReference>
<gene>
    <name type="primary">cicA</name>
    <name type="ordered locus">CCNA_02040</name>
</gene>
<keyword id="KW-1185">Reference proteome</keyword>
<accession>B8GX15</accession>
<accession>O87707</accession>